<sequence>MAYPFQLGLQDATSPIMEELLHFHDHTLMIVFLISSLVLYIISSMLTTKLTHTSTMDAQEVETVWTILPAIILVLIALPSLRILYMMDEINNPSLTVKTLGHQWYWSYEYTDYEDLNFDSYMIPTQELKPGELRLLEVDNRVVLPMEMTIRMLISSEDVLHSWAVPSLGLKTDAIPGRLNQTTLMATRPGLYYGQCSEICGSNHSFMPIVLEMVPLSYFETWSALML</sequence>
<feature type="chain" id="PRO_0000183694" description="Cytochrome c oxidase subunit 2">
    <location>
        <begin position="1"/>
        <end position="227"/>
    </location>
</feature>
<feature type="topological domain" description="Mitochondrial intermembrane" evidence="4">
    <location>
        <begin position="1"/>
        <end position="14"/>
    </location>
</feature>
<feature type="transmembrane region" description="Helical; Name=I" evidence="4">
    <location>
        <begin position="15"/>
        <end position="45"/>
    </location>
</feature>
<feature type="topological domain" description="Mitochondrial matrix" evidence="4">
    <location>
        <begin position="46"/>
        <end position="59"/>
    </location>
</feature>
<feature type="transmembrane region" description="Helical; Name=II" evidence="4">
    <location>
        <begin position="60"/>
        <end position="87"/>
    </location>
</feature>
<feature type="topological domain" description="Mitochondrial intermembrane" evidence="4">
    <location>
        <begin position="88"/>
        <end position="227"/>
    </location>
</feature>
<feature type="binding site" evidence="4">
    <location>
        <position position="161"/>
    </location>
    <ligand>
        <name>Cu cation</name>
        <dbReference type="ChEBI" id="CHEBI:23378"/>
        <label>A1</label>
    </ligand>
</feature>
<feature type="binding site" evidence="4">
    <location>
        <position position="196"/>
    </location>
    <ligand>
        <name>Cu cation</name>
        <dbReference type="ChEBI" id="CHEBI:23378"/>
        <label>A1</label>
    </ligand>
</feature>
<feature type="binding site" evidence="4">
    <location>
        <position position="196"/>
    </location>
    <ligand>
        <name>Cu cation</name>
        <dbReference type="ChEBI" id="CHEBI:23378"/>
        <label>A2</label>
    </ligand>
</feature>
<feature type="binding site" evidence="4">
    <location>
        <position position="198"/>
    </location>
    <ligand>
        <name>Cu cation</name>
        <dbReference type="ChEBI" id="CHEBI:23378"/>
        <label>A2</label>
    </ligand>
</feature>
<feature type="binding site" evidence="4">
    <location>
        <position position="198"/>
    </location>
    <ligand>
        <name>Mg(2+)</name>
        <dbReference type="ChEBI" id="CHEBI:18420"/>
        <note>ligand shared with MT-CO1</note>
    </ligand>
</feature>
<feature type="binding site" evidence="4">
    <location>
        <position position="200"/>
    </location>
    <ligand>
        <name>Cu cation</name>
        <dbReference type="ChEBI" id="CHEBI:23378"/>
        <label>A1</label>
    </ligand>
</feature>
<feature type="binding site" evidence="4">
    <location>
        <position position="200"/>
    </location>
    <ligand>
        <name>Cu cation</name>
        <dbReference type="ChEBI" id="CHEBI:23378"/>
        <label>A2</label>
    </ligand>
</feature>
<feature type="binding site" evidence="4">
    <location>
        <position position="204"/>
    </location>
    <ligand>
        <name>Cu cation</name>
        <dbReference type="ChEBI" id="CHEBI:23378"/>
        <label>A2</label>
    </ligand>
</feature>
<feature type="binding site" evidence="4">
    <location>
        <position position="207"/>
    </location>
    <ligand>
        <name>Cu cation</name>
        <dbReference type="ChEBI" id="CHEBI:23378"/>
        <label>A1</label>
    </ligand>
</feature>
<feature type="modified residue" description="Phosphotyrosine" evidence="2">
    <location>
        <position position="218"/>
    </location>
</feature>
<organism>
    <name type="scientific">Speothos venaticus</name>
    <name type="common">Bush dog</name>
    <dbReference type="NCBI Taxonomy" id="68741"/>
    <lineage>
        <taxon>Eukaryota</taxon>
        <taxon>Metazoa</taxon>
        <taxon>Chordata</taxon>
        <taxon>Craniata</taxon>
        <taxon>Vertebrata</taxon>
        <taxon>Euteleostomi</taxon>
        <taxon>Mammalia</taxon>
        <taxon>Eutheria</taxon>
        <taxon>Laurasiatheria</taxon>
        <taxon>Carnivora</taxon>
        <taxon>Caniformia</taxon>
        <taxon>Canidae</taxon>
        <taxon>Speothos</taxon>
    </lineage>
</organism>
<accession>O47679</accession>
<geneLocation type="mitochondrion"/>
<keyword id="KW-0186">Copper</keyword>
<keyword id="KW-0249">Electron transport</keyword>
<keyword id="KW-0460">Magnesium</keyword>
<keyword id="KW-0472">Membrane</keyword>
<keyword id="KW-0479">Metal-binding</keyword>
<keyword id="KW-0496">Mitochondrion</keyword>
<keyword id="KW-0999">Mitochondrion inner membrane</keyword>
<keyword id="KW-0597">Phosphoprotein</keyword>
<keyword id="KW-0679">Respiratory chain</keyword>
<keyword id="KW-1278">Translocase</keyword>
<keyword id="KW-0812">Transmembrane</keyword>
<keyword id="KW-1133">Transmembrane helix</keyword>
<keyword id="KW-0813">Transport</keyword>
<dbReference type="EC" id="7.1.1.9"/>
<dbReference type="EMBL" id="AF028227">
    <property type="protein sequence ID" value="AAC00120.1"/>
    <property type="molecule type" value="Genomic_DNA"/>
</dbReference>
<dbReference type="SMR" id="O47679"/>
<dbReference type="GO" id="GO:0005743">
    <property type="term" value="C:mitochondrial inner membrane"/>
    <property type="evidence" value="ECO:0007669"/>
    <property type="project" value="UniProtKB-SubCell"/>
</dbReference>
<dbReference type="GO" id="GO:0045277">
    <property type="term" value="C:respiratory chain complex IV"/>
    <property type="evidence" value="ECO:0000250"/>
    <property type="project" value="UniProtKB"/>
</dbReference>
<dbReference type="GO" id="GO:0005507">
    <property type="term" value="F:copper ion binding"/>
    <property type="evidence" value="ECO:0007669"/>
    <property type="project" value="InterPro"/>
</dbReference>
<dbReference type="GO" id="GO:0004129">
    <property type="term" value="F:cytochrome-c oxidase activity"/>
    <property type="evidence" value="ECO:0007669"/>
    <property type="project" value="UniProtKB-EC"/>
</dbReference>
<dbReference type="GO" id="GO:0042773">
    <property type="term" value="P:ATP synthesis coupled electron transport"/>
    <property type="evidence" value="ECO:0007669"/>
    <property type="project" value="TreeGrafter"/>
</dbReference>
<dbReference type="CDD" id="cd13912">
    <property type="entry name" value="CcO_II_C"/>
    <property type="match status" value="1"/>
</dbReference>
<dbReference type="FunFam" id="1.10.287.90:FF:000001">
    <property type="entry name" value="Cytochrome c oxidase subunit 2"/>
    <property type="match status" value="1"/>
</dbReference>
<dbReference type="FunFam" id="2.60.40.420:FF:000001">
    <property type="entry name" value="Cytochrome c oxidase subunit 2"/>
    <property type="match status" value="1"/>
</dbReference>
<dbReference type="Gene3D" id="1.10.287.90">
    <property type="match status" value="1"/>
</dbReference>
<dbReference type="Gene3D" id="2.60.40.420">
    <property type="entry name" value="Cupredoxins - blue copper proteins"/>
    <property type="match status" value="1"/>
</dbReference>
<dbReference type="InterPro" id="IPR045187">
    <property type="entry name" value="CcO_II"/>
</dbReference>
<dbReference type="InterPro" id="IPR002429">
    <property type="entry name" value="CcO_II-like_C"/>
</dbReference>
<dbReference type="InterPro" id="IPR034210">
    <property type="entry name" value="CcO_II_C"/>
</dbReference>
<dbReference type="InterPro" id="IPR001505">
    <property type="entry name" value="Copper_CuA"/>
</dbReference>
<dbReference type="InterPro" id="IPR008972">
    <property type="entry name" value="Cupredoxin"/>
</dbReference>
<dbReference type="InterPro" id="IPR014222">
    <property type="entry name" value="Cyt_c_oxidase_su2"/>
</dbReference>
<dbReference type="InterPro" id="IPR011759">
    <property type="entry name" value="Cyt_c_oxidase_su2_TM_dom"/>
</dbReference>
<dbReference type="InterPro" id="IPR036257">
    <property type="entry name" value="Cyt_c_oxidase_su2_TM_sf"/>
</dbReference>
<dbReference type="NCBIfam" id="TIGR02866">
    <property type="entry name" value="CoxB"/>
    <property type="match status" value="1"/>
</dbReference>
<dbReference type="PANTHER" id="PTHR22888:SF9">
    <property type="entry name" value="CYTOCHROME C OXIDASE SUBUNIT 2"/>
    <property type="match status" value="1"/>
</dbReference>
<dbReference type="PANTHER" id="PTHR22888">
    <property type="entry name" value="CYTOCHROME C OXIDASE, SUBUNIT II"/>
    <property type="match status" value="1"/>
</dbReference>
<dbReference type="Pfam" id="PF00116">
    <property type="entry name" value="COX2"/>
    <property type="match status" value="1"/>
</dbReference>
<dbReference type="Pfam" id="PF02790">
    <property type="entry name" value="COX2_TM"/>
    <property type="match status" value="1"/>
</dbReference>
<dbReference type="PRINTS" id="PR01166">
    <property type="entry name" value="CYCOXIDASEII"/>
</dbReference>
<dbReference type="SUPFAM" id="SSF49503">
    <property type="entry name" value="Cupredoxins"/>
    <property type="match status" value="1"/>
</dbReference>
<dbReference type="SUPFAM" id="SSF81464">
    <property type="entry name" value="Cytochrome c oxidase subunit II-like, transmembrane region"/>
    <property type="match status" value="1"/>
</dbReference>
<dbReference type="PROSITE" id="PS00078">
    <property type="entry name" value="COX2"/>
    <property type="match status" value="1"/>
</dbReference>
<dbReference type="PROSITE" id="PS50857">
    <property type="entry name" value="COX2_CUA"/>
    <property type="match status" value="1"/>
</dbReference>
<dbReference type="PROSITE" id="PS50999">
    <property type="entry name" value="COX2_TM"/>
    <property type="match status" value="1"/>
</dbReference>
<gene>
    <name type="primary">MT-CO2</name>
    <name type="synonym">COII</name>
    <name type="synonym">COX2</name>
    <name type="synonym">COXII</name>
    <name type="synonym">MTCO2</name>
</gene>
<evidence type="ECO:0000250" key="1">
    <source>
        <dbReference type="UniProtKB" id="P00403"/>
    </source>
</evidence>
<evidence type="ECO:0000250" key="2">
    <source>
        <dbReference type="UniProtKB" id="P00406"/>
    </source>
</evidence>
<evidence type="ECO:0000250" key="3">
    <source>
        <dbReference type="UniProtKB" id="P00410"/>
    </source>
</evidence>
<evidence type="ECO:0000250" key="4">
    <source>
        <dbReference type="UniProtKB" id="P68530"/>
    </source>
</evidence>
<evidence type="ECO:0000305" key="5"/>
<proteinExistence type="inferred from homology"/>
<name>COX2_SPEVE</name>
<protein>
    <recommendedName>
        <fullName>Cytochrome c oxidase subunit 2</fullName>
        <ecNumber>7.1.1.9</ecNumber>
    </recommendedName>
    <alternativeName>
        <fullName>Cytochrome c oxidase polypeptide II</fullName>
    </alternativeName>
</protein>
<reference key="1">
    <citation type="journal article" date="1997" name="Syst. Biol.">
        <title>Molecular systematics of the Canidae.</title>
        <authorList>
            <person name="Wayne R.K."/>
            <person name="Geffen E."/>
            <person name="Girman D.J."/>
            <person name="Koepfli K.-P."/>
            <person name="Lau L.M."/>
            <person name="Marshall C.R."/>
        </authorList>
    </citation>
    <scope>NUCLEOTIDE SEQUENCE [GENOMIC DNA]</scope>
</reference>
<comment type="function">
    <text evidence="3">Component of the cytochrome c oxidase, the last enzyme in the mitochondrial electron transport chain which drives oxidative phosphorylation. The respiratory chain contains 3 multisubunit complexes succinate dehydrogenase (complex II, CII), ubiquinol-cytochrome c oxidoreductase (cytochrome b-c1 complex, complex III, CIII) and cytochrome c oxidase (complex IV, CIV), that cooperate to transfer electrons derived from NADH and succinate to molecular oxygen, creating an electrochemical gradient over the inner membrane that drives transmembrane transport and the ATP synthase. Cytochrome c oxidase is the component of the respiratory chain that catalyzes the reduction of oxygen to water. Electrons originating from reduced cytochrome c in the intermembrane space (IMS) are transferred via the dinuclear copper A center (CU(A)) of subunit 2 and heme A of subunit 1 to the active site in subunit 1, a binuclear center (BNC) formed by heme A3 and copper B (CU(B)). The BNC reduces molecular oxygen to 2 water molecules using 4 electrons from cytochrome c in the IMS and 4 protons from the mitochondrial matrix.</text>
</comment>
<comment type="catalytic activity">
    <reaction evidence="3">
        <text>4 Fe(II)-[cytochrome c] + O2 + 8 H(+)(in) = 4 Fe(III)-[cytochrome c] + 2 H2O + 4 H(+)(out)</text>
        <dbReference type="Rhea" id="RHEA:11436"/>
        <dbReference type="Rhea" id="RHEA-COMP:10350"/>
        <dbReference type="Rhea" id="RHEA-COMP:14399"/>
        <dbReference type="ChEBI" id="CHEBI:15377"/>
        <dbReference type="ChEBI" id="CHEBI:15378"/>
        <dbReference type="ChEBI" id="CHEBI:15379"/>
        <dbReference type="ChEBI" id="CHEBI:29033"/>
        <dbReference type="ChEBI" id="CHEBI:29034"/>
        <dbReference type="EC" id="7.1.1.9"/>
    </reaction>
    <physiologicalReaction direction="left-to-right" evidence="3">
        <dbReference type="Rhea" id="RHEA:11437"/>
    </physiologicalReaction>
</comment>
<comment type="cofactor">
    <cofactor evidence="4">
        <name>Cu cation</name>
        <dbReference type="ChEBI" id="CHEBI:23378"/>
    </cofactor>
    <text evidence="4">Binds a dinuclear copper A center per subunit.</text>
</comment>
<comment type="subunit">
    <text evidence="1 4">Component of the cytochrome c oxidase (complex IV, CIV), a multisubunit enzyme composed of 14 subunits. The complex is composed of a catalytic core of 3 subunits MT-CO1, MT-CO2 and MT-CO3, encoded in the mitochondrial DNA, and 11 supernumerary subunits COX4I, COX5A, COX5B, COX6A, COX6B, COX6C, COX7A, COX7B, COX7C, COX8 and NDUFA4, which are encoded in the nuclear genome. The complex exists as a monomer or a dimer and forms supercomplexes (SCs) in the inner mitochondrial membrane with NADH-ubiquinone oxidoreductase (complex I, CI) and ubiquinol-cytochrome c oxidoreductase (cytochrome b-c1 complex, complex III, CIII), resulting in different assemblies (supercomplex SCI(1)III(2)IV(1) and megacomplex MCI(2)III(2)IV(2)) (By similarity). Found in a complex with TMEM177, COA6, COX18, COX20, SCO1 and SCO2. Interacts with TMEM177 in a COX20-dependent manner. Interacts with COX20. Interacts with COX16 (By similarity).</text>
</comment>
<comment type="subcellular location">
    <subcellularLocation>
        <location evidence="4">Mitochondrion inner membrane</location>
        <topology evidence="4">Multi-pass membrane protein</topology>
    </subcellularLocation>
</comment>
<comment type="similarity">
    <text evidence="5">Belongs to the cytochrome c oxidase subunit 2 family.</text>
</comment>